<comment type="function">
    <text evidence="1">Delta-conotoxins bind to site 6 of voltage-gated sodium channels (Nav) and inhibit the inactivation process.</text>
</comment>
<comment type="subcellular location">
    <subcellularLocation>
        <location evidence="1">Secreted</location>
    </subcellularLocation>
</comment>
<comment type="tissue specificity">
    <text>Expressed by the venom duct.</text>
</comment>
<comment type="domain">
    <text>The presence of a 'disulfide through disulfide knot' structurally defines this protein as a knottin.</text>
</comment>
<comment type="domain">
    <text>The cysteine framework is VI/VII (C-C-CC-C-C).</text>
</comment>
<comment type="similarity">
    <text evidence="3">Belongs to the conotoxin O1 superfamily.</text>
</comment>
<protein>
    <recommendedName>
        <fullName>Delta-conotoxin-like Ai6.1</fullName>
    </recommendedName>
</protein>
<sequence length="78" mass="8742">MKLTCVMIVAVLFLTAWTFATADDPRNGLGNLFSNAHHEMKNPEASKLNKRWCKQSGEMCNLLDQNCCEGYCIVLVCT</sequence>
<dbReference type="EMBL" id="DJ379394">
    <property type="status" value="NOT_ANNOTATED_CDS"/>
    <property type="molecule type" value="Unassigned_DNA"/>
</dbReference>
<dbReference type="ConoServer" id="3028">
    <property type="toxin name" value="Ai6.1 precursor"/>
</dbReference>
<dbReference type="GO" id="GO:0005576">
    <property type="term" value="C:extracellular region"/>
    <property type="evidence" value="ECO:0007669"/>
    <property type="project" value="UniProtKB-SubCell"/>
</dbReference>
<dbReference type="GO" id="GO:0019871">
    <property type="term" value="F:sodium channel inhibitor activity"/>
    <property type="evidence" value="ECO:0007669"/>
    <property type="project" value="InterPro"/>
</dbReference>
<dbReference type="GO" id="GO:0090729">
    <property type="term" value="F:toxin activity"/>
    <property type="evidence" value="ECO:0007669"/>
    <property type="project" value="UniProtKB-KW"/>
</dbReference>
<dbReference type="InterPro" id="IPR004214">
    <property type="entry name" value="Conotoxin"/>
</dbReference>
<dbReference type="InterPro" id="IPR012322">
    <property type="entry name" value="Conotoxin_d-typ_CS"/>
</dbReference>
<dbReference type="Pfam" id="PF02950">
    <property type="entry name" value="Conotoxin"/>
    <property type="match status" value="1"/>
</dbReference>
<dbReference type="SUPFAM" id="SSF57059">
    <property type="entry name" value="omega toxin-like"/>
    <property type="match status" value="1"/>
</dbReference>
<dbReference type="PROSITE" id="PS60005">
    <property type="entry name" value="DELTA_CONOTOXIN"/>
    <property type="match status" value="1"/>
</dbReference>
<organism>
    <name type="scientific">Conus ammiralis</name>
    <name type="common">Admiral cone</name>
    <dbReference type="NCBI Taxonomy" id="97188"/>
    <lineage>
        <taxon>Eukaryota</taxon>
        <taxon>Metazoa</taxon>
        <taxon>Spiralia</taxon>
        <taxon>Lophotrochozoa</taxon>
        <taxon>Mollusca</taxon>
        <taxon>Gastropoda</taxon>
        <taxon>Caenogastropoda</taxon>
        <taxon>Neogastropoda</taxon>
        <taxon>Conoidea</taxon>
        <taxon>Conidae</taxon>
        <taxon>Conus</taxon>
        <taxon>Cylinder</taxon>
    </lineage>
</organism>
<feature type="signal peptide" evidence="2">
    <location>
        <begin position="1"/>
        <end position="22"/>
    </location>
</feature>
<feature type="propeptide" id="PRO_0000380620" evidence="1">
    <location>
        <begin position="23"/>
        <end position="49"/>
    </location>
</feature>
<feature type="peptide" id="PRO_0000380621" description="Delta-conotoxin-like Ai6.1">
    <location>
        <begin position="52"/>
        <end position="78"/>
    </location>
</feature>
<feature type="disulfide bond" evidence="1">
    <location>
        <begin position="53"/>
        <end position="68"/>
    </location>
</feature>
<feature type="disulfide bond" evidence="1">
    <location>
        <begin position="60"/>
        <end position="72"/>
    </location>
</feature>
<feature type="disulfide bond" evidence="1">
    <location>
        <begin position="67"/>
        <end position="77"/>
    </location>
</feature>
<accession>P0CB09</accession>
<evidence type="ECO:0000250" key="1"/>
<evidence type="ECO:0000255" key="2"/>
<evidence type="ECO:0000305" key="3"/>
<name>O161_CONAJ</name>
<reference key="1">
    <citation type="patent" date="2003-11-11" number="JP2003533178">
        <title>O-superfamily conotoxin peptides.</title>
        <authorList>
            <person name="Hillyard D.R."/>
            <person name="Mcintosh M.J."/>
            <person name="Jones R.M."/>
            <person name="Cartier E.G."/>
            <person name="Watkins M."/>
            <person name="Olivera B.M."/>
            <person name="Layer R.T."/>
        </authorList>
    </citation>
    <scope>NUCLEOTIDE SEQUENCE</scope>
</reference>
<proteinExistence type="evidence at transcript level"/>
<keyword id="KW-0165">Cleavage on pair of basic residues</keyword>
<keyword id="KW-1015">Disulfide bond</keyword>
<keyword id="KW-0872">Ion channel impairing toxin</keyword>
<keyword id="KW-0960">Knottin</keyword>
<keyword id="KW-0528">Neurotoxin</keyword>
<keyword id="KW-0964">Secreted</keyword>
<keyword id="KW-0732">Signal</keyword>
<keyword id="KW-0800">Toxin</keyword>
<keyword id="KW-0738">Voltage-gated sodium channel impairing toxin</keyword>